<gene>
    <name evidence="1" type="primary">atpE</name>
    <name type="ordered locus">Hore_19410</name>
</gene>
<keyword id="KW-0066">ATP synthesis</keyword>
<keyword id="KW-0375">Hydrogen ion transport</keyword>
<keyword id="KW-0406">Ion transport</keyword>
<keyword id="KW-1185">Reference proteome</keyword>
<keyword id="KW-0813">Transport</keyword>
<accession>B8CZG9</accession>
<organism>
    <name type="scientific">Halothermothrix orenii (strain H 168 / OCM 544 / DSM 9562)</name>
    <dbReference type="NCBI Taxonomy" id="373903"/>
    <lineage>
        <taxon>Bacteria</taxon>
        <taxon>Bacillati</taxon>
        <taxon>Bacillota</taxon>
        <taxon>Clostridia</taxon>
        <taxon>Halanaerobiales</taxon>
        <taxon>Halothermotrichaceae</taxon>
        <taxon>Halothermothrix</taxon>
    </lineage>
</organism>
<name>VATE_HALOH</name>
<feature type="chain" id="PRO_1000132897" description="V-type proton ATPase subunit E">
    <location>
        <begin position="1"/>
        <end position="202"/>
    </location>
</feature>
<sequence length="202" mass="24083">MDVSKKISVIKKEIINEALDKKEQIISREKDKWEKEYEDFKQKLDNKEKEIIELYRQEARMKKEQIVSRAVLKKKTEKRQKMDEYLHQILKELEEKLHEYRNDTGYRDFLKRLVKDSLNVMESSHVIIKLNSHDLKIFNEIQDELRNEIDNIEIEVANNPLNISGGVIVEDRDGKEIVENTFETCLEEVKEDIAVELHSKVL</sequence>
<proteinExistence type="inferred from homology"/>
<protein>
    <recommendedName>
        <fullName evidence="1">V-type proton ATPase subunit E</fullName>
    </recommendedName>
    <alternativeName>
        <fullName evidence="1">V-ATPase subunit E</fullName>
    </alternativeName>
</protein>
<evidence type="ECO:0000255" key="1">
    <source>
        <dbReference type="HAMAP-Rule" id="MF_00311"/>
    </source>
</evidence>
<comment type="function">
    <text evidence="1">Produces ATP from ADP in the presence of a proton gradient across the membrane.</text>
</comment>
<comment type="similarity">
    <text evidence="1">Belongs to the V-ATPase E subunit family.</text>
</comment>
<dbReference type="EMBL" id="CP001098">
    <property type="protein sequence ID" value="ACL70688.1"/>
    <property type="molecule type" value="Genomic_DNA"/>
</dbReference>
<dbReference type="RefSeq" id="WP_015923657.1">
    <property type="nucleotide sequence ID" value="NC_011899.1"/>
</dbReference>
<dbReference type="SMR" id="B8CZG9"/>
<dbReference type="STRING" id="373903.Hore_19410"/>
<dbReference type="KEGG" id="hor:Hore_19410"/>
<dbReference type="eggNOG" id="COG1390">
    <property type="taxonomic scope" value="Bacteria"/>
</dbReference>
<dbReference type="HOGENOM" id="CLU_1353063_0_0_9"/>
<dbReference type="OrthoDB" id="2112701at2"/>
<dbReference type="Proteomes" id="UP000000719">
    <property type="component" value="Chromosome"/>
</dbReference>
<dbReference type="GO" id="GO:0033178">
    <property type="term" value="C:proton-transporting two-sector ATPase complex, catalytic domain"/>
    <property type="evidence" value="ECO:0007669"/>
    <property type="project" value="InterPro"/>
</dbReference>
<dbReference type="GO" id="GO:0005524">
    <property type="term" value="F:ATP binding"/>
    <property type="evidence" value="ECO:0007669"/>
    <property type="project" value="UniProtKB-UniRule"/>
</dbReference>
<dbReference type="GO" id="GO:0046933">
    <property type="term" value="F:proton-transporting ATP synthase activity, rotational mechanism"/>
    <property type="evidence" value="ECO:0007669"/>
    <property type="project" value="UniProtKB-UniRule"/>
</dbReference>
<dbReference type="GO" id="GO:0046961">
    <property type="term" value="F:proton-transporting ATPase activity, rotational mechanism"/>
    <property type="evidence" value="ECO:0007669"/>
    <property type="project" value="InterPro"/>
</dbReference>
<dbReference type="GO" id="GO:0042777">
    <property type="term" value="P:proton motive force-driven plasma membrane ATP synthesis"/>
    <property type="evidence" value="ECO:0007669"/>
    <property type="project" value="UniProtKB-UniRule"/>
</dbReference>
<dbReference type="Gene3D" id="3.30.2320.30">
    <property type="entry name" value="ATP synthase, E subunit, C-terminal"/>
    <property type="match status" value="1"/>
</dbReference>
<dbReference type="HAMAP" id="MF_00311">
    <property type="entry name" value="ATP_synth_E_arch"/>
    <property type="match status" value="1"/>
</dbReference>
<dbReference type="InterPro" id="IPR038495">
    <property type="entry name" value="ATPase_E_C"/>
</dbReference>
<dbReference type="InterPro" id="IPR002842">
    <property type="entry name" value="ATPase_V1_Esu"/>
</dbReference>
<dbReference type="Pfam" id="PF01991">
    <property type="entry name" value="vATP-synt_E"/>
    <property type="match status" value="1"/>
</dbReference>
<dbReference type="SUPFAM" id="SSF160527">
    <property type="entry name" value="V-type ATPase subunit E-like"/>
    <property type="match status" value="1"/>
</dbReference>
<reference key="1">
    <citation type="journal article" date="2009" name="PLoS ONE">
        <title>Genome analysis of the anaerobic thermohalophilic bacterium Halothermothrix orenii.</title>
        <authorList>
            <person name="Mavromatis K."/>
            <person name="Ivanova N."/>
            <person name="Anderson I."/>
            <person name="Lykidis A."/>
            <person name="Hooper S.D."/>
            <person name="Sun H."/>
            <person name="Kunin V."/>
            <person name="Lapidus A."/>
            <person name="Hugenholtz P."/>
            <person name="Patel B."/>
            <person name="Kyrpides N.C."/>
        </authorList>
    </citation>
    <scope>NUCLEOTIDE SEQUENCE [LARGE SCALE GENOMIC DNA]</scope>
    <source>
        <strain>H 168 / OCM 544 / DSM 9562</strain>
    </source>
</reference>